<proteinExistence type="inferred from homology"/>
<comment type="function">
    <text evidence="1">Promotes RNA polymerase assembly. Latches the N- and C-terminal regions of the beta' subunit thereby facilitating its interaction with the beta and alpha subunits.</text>
</comment>
<comment type="catalytic activity">
    <reaction evidence="1">
        <text>RNA(n) + a ribonucleoside 5'-triphosphate = RNA(n+1) + diphosphate</text>
        <dbReference type="Rhea" id="RHEA:21248"/>
        <dbReference type="Rhea" id="RHEA-COMP:14527"/>
        <dbReference type="Rhea" id="RHEA-COMP:17342"/>
        <dbReference type="ChEBI" id="CHEBI:33019"/>
        <dbReference type="ChEBI" id="CHEBI:61557"/>
        <dbReference type="ChEBI" id="CHEBI:140395"/>
        <dbReference type="EC" id="2.7.7.6"/>
    </reaction>
</comment>
<comment type="subunit">
    <text evidence="1">The RNAP catalytic core consists of 2 alpha, 1 beta, 1 beta' and 1 omega subunit. When a sigma factor is associated with the core the holoenzyme is formed, which can initiate transcription.</text>
</comment>
<comment type="similarity">
    <text evidence="1">Belongs to the RNA polymerase subunit omega family.</text>
</comment>
<dbReference type="EC" id="2.7.7.6" evidence="1"/>
<dbReference type="EMBL" id="CP001056">
    <property type="protein sequence ID" value="ACD22276.1"/>
    <property type="molecule type" value="Genomic_DNA"/>
</dbReference>
<dbReference type="SMR" id="B2THR8"/>
<dbReference type="KEGG" id="cbk:CLL_A1212"/>
<dbReference type="PATRIC" id="fig|935198.13.peg.1157"/>
<dbReference type="HOGENOM" id="CLU_125406_6_1_9"/>
<dbReference type="Proteomes" id="UP000001195">
    <property type="component" value="Chromosome"/>
</dbReference>
<dbReference type="GO" id="GO:0000428">
    <property type="term" value="C:DNA-directed RNA polymerase complex"/>
    <property type="evidence" value="ECO:0007669"/>
    <property type="project" value="UniProtKB-KW"/>
</dbReference>
<dbReference type="GO" id="GO:0003677">
    <property type="term" value="F:DNA binding"/>
    <property type="evidence" value="ECO:0007669"/>
    <property type="project" value="UniProtKB-UniRule"/>
</dbReference>
<dbReference type="GO" id="GO:0003899">
    <property type="term" value="F:DNA-directed RNA polymerase activity"/>
    <property type="evidence" value="ECO:0007669"/>
    <property type="project" value="UniProtKB-UniRule"/>
</dbReference>
<dbReference type="GO" id="GO:0006351">
    <property type="term" value="P:DNA-templated transcription"/>
    <property type="evidence" value="ECO:0007669"/>
    <property type="project" value="UniProtKB-UniRule"/>
</dbReference>
<dbReference type="Gene3D" id="3.90.940.10">
    <property type="match status" value="1"/>
</dbReference>
<dbReference type="HAMAP" id="MF_00366">
    <property type="entry name" value="RNApol_bact_RpoZ"/>
    <property type="match status" value="1"/>
</dbReference>
<dbReference type="InterPro" id="IPR003716">
    <property type="entry name" value="DNA-dir_RNA_pol_omega"/>
</dbReference>
<dbReference type="InterPro" id="IPR006110">
    <property type="entry name" value="Pol_omega/Rpo6/RPB6"/>
</dbReference>
<dbReference type="InterPro" id="IPR036161">
    <property type="entry name" value="RPB6/omega-like_sf"/>
</dbReference>
<dbReference type="NCBIfam" id="TIGR00690">
    <property type="entry name" value="rpoZ"/>
    <property type="match status" value="1"/>
</dbReference>
<dbReference type="PANTHER" id="PTHR34476">
    <property type="entry name" value="DNA-DIRECTED RNA POLYMERASE SUBUNIT OMEGA"/>
    <property type="match status" value="1"/>
</dbReference>
<dbReference type="PANTHER" id="PTHR34476:SF1">
    <property type="entry name" value="DNA-DIRECTED RNA POLYMERASE SUBUNIT OMEGA"/>
    <property type="match status" value="1"/>
</dbReference>
<dbReference type="Pfam" id="PF01192">
    <property type="entry name" value="RNA_pol_Rpb6"/>
    <property type="match status" value="1"/>
</dbReference>
<dbReference type="SMART" id="SM01409">
    <property type="entry name" value="RNA_pol_Rpb6"/>
    <property type="match status" value="1"/>
</dbReference>
<dbReference type="SUPFAM" id="SSF63562">
    <property type="entry name" value="RPB6/omega subunit-like"/>
    <property type="match status" value="1"/>
</dbReference>
<feature type="chain" id="PRO_1000121202" description="DNA-directed RNA polymerase subunit omega">
    <location>
        <begin position="1"/>
        <end position="66"/>
    </location>
</feature>
<sequence>MNNSMINPSIVDLLTKVGDRYSLVILTSKRAREIIEGAEPLTKVDSHKPLTIAINEVNEDIVKYEE</sequence>
<reference key="1">
    <citation type="submission" date="2008-04" db="EMBL/GenBank/DDBJ databases">
        <title>Complete sequence of Clostridium botulinum strain Eklund.</title>
        <authorList>
            <person name="Brinkac L.M."/>
            <person name="Brown J.L."/>
            <person name="Bruce D."/>
            <person name="Detter C."/>
            <person name="Munk C."/>
            <person name="Smith L.A."/>
            <person name="Smith T.J."/>
            <person name="Sutton G."/>
            <person name="Brettin T.S."/>
        </authorList>
    </citation>
    <scope>NUCLEOTIDE SEQUENCE [LARGE SCALE GENOMIC DNA]</scope>
    <source>
        <strain>Eklund 17B / Type B</strain>
    </source>
</reference>
<keyword id="KW-0240">DNA-directed RNA polymerase</keyword>
<keyword id="KW-0548">Nucleotidyltransferase</keyword>
<keyword id="KW-0804">Transcription</keyword>
<keyword id="KW-0808">Transferase</keyword>
<gene>
    <name evidence="1" type="primary">rpoZ</name>
    <name type="ordered locus">CLL_A1212</name>
</gene>
<accession>B2THR8</accession>
<name>RPOZ_CLOBB</name>
<organism>
    <name type="scientific">Clostridium botulinum (strain Eklund 17B / Type B)</name>
    <dbReference type="NCBI Taxonomy" id="935198"/>
    <lineage>
        <taxon>Bacteria</taxon>
        <taxon>Bacillati</taxon>
        <taxon>Bacillota</taxon>
        <taxon>Clostridia</taxon>
        <taxon>Eubacteriales</taxon>
        <taxon>Clostridiaceae</taxon>
        <taxon>Clostridium</taxon>
    </lineage>
</organism>
<protein>
    <recommendedName>
        <fullName evidence="1">DNA-directed RNA polymerase subunit omega</fullName>
        <shortName evidence="1">RNAP omega subunit</shortName>
        <ecNumber evidence="1">2.7.7.6</ecNumber>
    </recommendedName>
    <alternativeName>
        <fullName evidence="1">RNA polymerase omega subunit</fullName>
    </alternativeName>
    <alternativeName>
        <fullName evidence="1">Transcriptase subunit omega</fullName>
    </alternativeName>
</protein>
<evidence type="ECO:0000255" key="1">
    <source>
        <dbReference type="HAMAP-Rule" id="MF_00366"/>
    </source>
</evidence>